<dbReference type="EMBL" id="FP015965">
    <property type="status" value="NOT_ANNOTATED_CDS"/>
    <property type="molecule type" value="Genomic_DNA"/>
</dbReference>
<dbReference type="EMBL" id="FP017274">
    <property type="status" value="NOT_ANNOTATED_CDS"/>
    <property type="molecule type" value="Genomic_DNA"/>
</dbReference>
<dbReference type="EMBL" id="BC047846">
    <property type="protein sequence ID" value="AAH47846.1"/>
    <property type="molecule type" value="mRNA"/>
</dbReference>
<dbReference type="RefSeq" id="NP_956544.1">
    <property type="nucleotide sequence ID" value="NM_200250.1"/>
</dbReference>
<dbReference type="RefSeq" id="XP_005158820.1">
    <molecule id="E7F1H9-1"/>
    <property type="nucleotide sequence ID" value="XM_005158763.5"/>
</dbReference>
<dbReference type="SMR" id="E7F1H9"/>
<dbReference type="FunCoup" id="E7F1H9">
    <property type="interactions" value="2240"/>
</dbReference>
<dbReference type="STRING" id="7955.ENSDARP00000107692"/>
<dbReference type="PaxDb" id="7955-ENSDARP00000107692"/>
<dbReference type="PeptideAtlas" id="E7F1H9"/>
<dbReference type="Ensembl" id="ENSDART00000127043">
    <molecule id="E7F1H9-1"/>
    <property type="protein sequence ID" value="ENSDARP00000107692"/>
    <property type="gene ID" value="ENSDARG00000014498"/>
</dbReference>
<dbReference type="GeneID" id="393220"/>
<dbReference type="KEGG" id="dre:393220"/>
<dbReference type="AGR" id="ZFIN:ZDB-GENE-040426-948"/>
<dbReference type="CTD" id="51441"/>
<dbReference type="ZFIN" id="ZDB-GENE-040426-948">
    <property type="gene designation" value="ythdf2"/>
</dbReference>
<dbReference type="eggNOG" id="KOG1901">
    <property type="taxonomic scope" value="Eukaryota"/>
</dbReference>
<dbReference type="HOGENOM" id="CLU_022715_0_0_1"/>
<dbReference type="InParanoid" id="E7F1H9"/>
<dbReference type="OMA" id="SPQARPX"/>
<dbReference type="OrthoDB" id="306690at2759"/>
<dbReference type="PhylomeDB" id="E7F1H9"/>
<dbReference type="TreeFam" id="TF323736"/>
<dbReference type="PRO" id="PR:E7F1H9"/>
<dbReference type="Proteomes" id="UP000000437">
    <property type="component" value="Chromosome 17"/>
</dbReference>
<dbReference type="Bgee" id="ENSDARG00000014498">
    <property type="expression patterns" value="Expressed in gastrula and 27 other cell types or tissues"/>
</dbReference>
<dbReference type="ExpressionAtlas" id="E7F1H9">
    <property type="expression patterns" value="baseline and differential"/>
</dbReference>
<dbReference type="GO" id="GO:0005737">
    <property type="term" value="C:cytoplasm"/>
    <property type="evidence" value="ECO:0000250"/>
    <property type="project" value="UniProtKB"/>
</dbReference>
<dbReference type="GO" id="GO:0010494">
    <property type="term" value="C:cytoplasmic stress granule"/>
    <property type="evidence" value="ECO:0000250"/>
    <property type="project" value="UniProtKB"/>
</dbReference>
<dbReference type="GO" id="GO:0005829">
    <property type="term" value="C:cytosol"/>
    <property type="evidence" value="ECO:0007669"/>
    <property type="project" value="UniProtKB-SubCell"/>
</dbReference>
<dbReference type="GO" id="GO:0005634">
    <property type="term" value="C:nucleus"/>
    <property type="evidence" value="ECO:0007669"/>
    <property type="project" value="UniProtKB-SubCell"/>
</dbReference>
<dbReference type="GO" id="GO:0000932">
    <property type="term" value="C:P-body"/>
    <property type="evidence" value="ECO:0000250"/>
    <property type="project" value="UniProtKB"/>
</dbReference>
<dbReference type="GO" id="GO:0062153">
    <property type="term" value="F:C5-methylcytidine-containing RNA reader activity"/>
    <property type="evidence" value="ECO:0000250"/>
    <property type="project" value="UniProtKB"/>
</dbReference>
<dbReference type="GO" id="GO:0003729">
    <property type="term" value="F:mRNA binding"/>
    <property type="evidence" value="ECO:0000318"/>
    <property type="project" value="GO_Central"/>
</dbReference>
<dbReference type="GO" id="GO:1990247">
    <property type="term" value="F:N6-methyladenosine-containing RNA reader activity"/>
    <property type="evidence" value="ECO:0000314"/>
    <property type="project" value="UniProtKB"/>
</dbReference>
<dbReference type="GO" id="GO:0048598">
    <property type="term" value="P:embryonic morphogenesis"/>
    <property type="evidence" value="ECO:0000315"/>
    <property type="project" value="UniProtKB"/>
</dbReference>
<dbReference type="GO" id="GO:0098508">
    <property type="term" value="P:endothelial to hematopoietic transition"/>
    <property type="evidence" value="ECO:0000315"/>
    <property type="project" value="UniProtKB"/>
</dbReference>
<dbReference type="GO" id="GO:0008585">
    <property type="term" value="P:female gonad development"/>
    <property type="evidence" value="ECO:0000316"/>
    <property type="project" value="ZFIN"/>
</dbReference>
<dbReference type="GO" id="GO:0007276">
    <property type="term" value="P:gamete generation"/>
    <property type="evidence" value="ECO:0000250"/>
    <property type="project" value="UniProtKB"/>
</dbReference>
<dbReference type="GO" id="GO:0071425">
    <property type="term" value="P:hematopoietic stem cell proliferation"/>
    <property type="evidence" value="ECO:0000315"/>
    <property type="project" value="ZFIN"/>
</dbReference>
<dbReference type="GO" id="GO:0006402">
    <property type="term" value="P:mRNA catabolic process"/>
    <property type="evidence" value="ECO:0000315"/>
    <property type="project" value="ZFIN"/>
</dbReference>
<dbReference type="GO" id="GO:0061157">
    <property type="term" value="P:mRNA destabilization"/>
    <property type="evidence" value="ECO:0000314"/>
    <property type="project" value="UniProtKB"/>
</dbReference>
<dbReference type="GO" id="GO:0045746">
    <property type="term" value="P:negative regulation of Notch signaling pathway"/>
    <property type="evidence" value="ECO:0000315"/>
    <property type="project" value="UniProtKB"/>
</dbReference>
<dbReference type="GO" id="GO:2000737">
    <property type="term" value="P:negative regulation of stem cell differentiation"/>
    <property type="evidence" value="ECO:0000250"/>
    <property type="project" value="UniProtKB"/>
</dbReference>
<dbReference type="GO" id="GO:0060339">
    <property type="term" value="P:negative regulation of type I interferon-mediated signaling pathway"/>
    <property type="evidence" value="ECO:0000250"/>
    <property type="project" value="UniProtKB"/>
</dbReference>
<dbReference type="GO" id="GO:0001556">
    <property type="term" value="P:oocyte maturation"/>
    <property type="evidence" value="ECO:0000250"/>
    <property type="project" value="UniProtKB"/>
</dbReference>
<dbReference type="GO" id="GO:0070925">
    <property type="term" value="P:organelle assembly"/>
    <property type="evidence" value="ECO:0000250"/>
    <property type="project" value="UniProtKB"/>
</dbReference>
<dbReference type="GO" id="GO:0030155">
    <property type="term" value="P:regulation of cell adhesion"/>
    <property type="evidence" value="ECO:0000250"/>
    <property type="project" value="UniProtKB"/>
</dbReference>
<dbReference type="GO" id="GO:1902036">
    <property type="term" value="P:regulation of hematopoietic stem cell differentiation"/>
    <property type="evidence" value="ECO:0000315"/>
    <property type="project" value="UniProtKB"/>
</dbReference>
<dbReference type="GO" id="GO:1903538">
    <property type="term" value="P:regulation of meiotic cell cycle process involved in oocyte maturation"/>
    <property type="evidence" value="ECO:0000250"/>
    <property type="project" value="UniProtKB"/>
</dbReference>
<dbReference type="GO" id="GO:0050767">
    <property type="term" value="P:regulation of neurogenesis"/>
    <property type="evidence" value="ECO:0000250"/>
    <property type="project" value="UniProtKB"/>
</dbReference>
<dbReference type="GO" id="GO:2000232">
    <property type="term" value="P:regulation of rRNA processing"/>
    <property type="evidence" value="ECO:0000250"/>
    <property type="project" value="UniProtKB"/>
</dbReference>
<dbReference type="GO" id="GO:0006401">
    <property type="term" value="P:RNA catabolic process"/>
    <property type="evidence" value="ECO:0000315"/>
    <property type="project" value="ZFIN"/>
</dbReference>
<dbReference type="GO" id="GO:0007284">
    <property type="term" value="P:spermatogonial cell division"/>
    <property type="evidence" value="ECO:0000250"/>
    <property type="project" value="UniProtKB"/>
</dbReference>
<dbReference type="GO" id="GO:0034063">
    <property type="term" value="P:stress granule assembly"/>
    <property type="evidence" value="ECO:0000250"/>
    <property type="project" value="UniProtKB"/>
</dbReference>
<dbReference type="CDD" id="cd21134">
    <property type="entry name" value="YTH"/>
    <property type="match status" value="1"/>
</dbReference>
<dbReference type="FunFam" id="3.10.590.10:FF:000001">
    <property type="entry name" value="YTH domain family 1, isoform CRA_a"/>
    <property type="match status" value="1"/>
</dbReference>
<dbReference type="Gene3D" id="3.10.590.10">
    <property type="entry name" value="ph1033 like domains"/>
    <property type="match status" value="1"/>
</dbReference>
<dbReference type="InterPro" id="IPR007275">
    <property type="entry name" value="YTH_domain"/>
</dbReference>
<dbReference type="InterPro" id="IPR045168">
    <property type="entry name" value="YTH_prot"/>
</dbReference>
<dbReference type="PANTHER" id="PTHR12357:SF8">
    <property type="entry name" value="YTH DOMAIN-CONTAINING FAMILY PROTEIN 2"/>
    <property type="match status" value="1"/>
</dbReference>
<dbReference type="PANTHER" id="PTHR12357">
    <property type="entry name" value="YTH YT521-B HOMOLOGY DOMAIN-CONTAINING"/>
    <property type="match status" value="1"/>
</dbReference>
<dbReference type="Pfam" id="PF04146">
    <property type="entry name" value="YTH"/>
    <property type="match status" value="1"/>
</dbReference>
<dbReference type="PROSITE" id="PS50882">
    <property type="entry name" value="YTH"/>
    <property type="match status" value="1"/>
</dbReference>
<protein>
    <recommendedName>
        <fullName evidence="7">YTH domain-containing family protein 2</fullName>
    </recommendedName>
</protein>
<accession>E7F1H9</accession>
<accession>Q7ZUS8</accession>
<comment type="function">
    <text evidence="1 4 5">Specifically recognizes and binds N6-methyladenosine (m6A)-containing RNAs, and regulates their stability (PubMed:28192787). M6A is a modification present at internal sites of mRNAs and some non-coding RNAs and plays a role in mRNA stability and processing (By similarity). Acts as a regulator of mRNA stability by promoting degradation of m6A-containing mRNAs (By similarity). The YTHDF paralogs (ythdf1, ythdf2 and ythdf3) share m6A-containing mRNAs targets and act redundantly to mediate mRNA degradation and cellular differentiation (By similarity). Plays a key role in maternal-to-zygotic transition during early embryonic development, the process during which maternally inherited mRNAs are degraded: acts by binding m6A-containing maternal mRNAs and promoting their degradation (PubMed:28192787). More than one-third of maternal mRNAs can be modified by m6A (PubMed:28192787). Binding to m6A-containing mRNAs results in mRNA degradation (By similarity). Also involved in hematopoietic stem cells specification by binding to m6A-containing mRNAs, such as notch1a, and promote their degradation (PubMed:28869969). The decreased Notch signaling following notch1a degradation promotes endothelial to hematopoietic transition (PubMed:28869969). Promotes formation of phase-separated membraneless compartments, such as P-bodies or stress granules, by undergoing liquid-liquid phase separation upon binding to mRNAs containing multiple m6A-modified residues: polymethylated mRNAs act as a multivalent scaffold for the binding of YTHDF proteins, juxtaposing their disordered regions and thereby leading to phase separation (By similarity). The resulting mRNA-YTHDF complexes then partition into different endogenous phase-separated membraneless compartments, such as P-bodies, stress granules or neuronal RNA granules (By similarity).</text>
</comment>
<comment type="subcellular location">
    <subcellularLocation>
        <location evidence="1">Cytoplasm</location>
        <location evidence="1">Cytosol</location>
    </subcellularLocation>
    <subcellularLocation>
        <location evidence="1">Cytoplasm</location>
        <location evidence="1">P-body</location>
    </subcellularLocation>
    <subcellularLocation>
        <location evidence="1">Cytoplasm</location>
        <location evidence="1">Stress granule</location>
    </subcellularLocation>
    <subcellularLocation>
        <location evidence="1">Nucleus</location>
    </subcellularLocation>
    <text evidence="1">Localizes to the cytosol and relocates to the nucleus following heat shock stress. Can partition into different structures: into P-bodies in unstressed cells, and into stress granules during stress.</text>
</comment>
<comment type="alternative products">
    <event type="alternative splicing"/>
    <isoform>
        <id>E7F1H9-1</id>
        <name>1</name>
        <sequence type="displayed"/>
    </isoform>
    <isoform>
        <id>E7F1H9-2</id>
        <name>2</name>
        <sequence type="described" ref="VSP_058906 VSP_058907"/>
    </isoform>
</comment>
<comment type="developmental stage">
    <text evidence="4">Ubiquitously expressed throughout early embryogenesis.</text>
</comment>
<comment type="domain">
    <text evidence="1">The disordered regions have the ability to interact with each other and to 'phase separate' into liquid droplets within the cytosol following binding to mRNAs containing multiple m6A-modified residues. This leads to the partition of m6A-containing mRNAs into membraneless compartments, where mRNAs may be stored, degraded or used to transport mRNAs to dendritic arbors in neurons.</text>
</comment>
<comment type="disruption phenotype">
    <text evidence="4">Homozygous mutants from the first generation do not show any visible phenotype. Crossing homozygotes mutants together leads to lethality in around 70% of their progeny, because embryos do not developed past the one-cell stage. This lethality is probably mediated by defective sperm males. Defects are due to impaired decay of N6-methyladenosine (m6A)-modified maternal mRNAs, leading to impede zygotic genome activation. Embryos fail to initiate timely maternal-to-zygotic, undergo cell-cycle pause and remain developmentally delayed.</text>
</comment>
<comment type="similarity">
    <text evidence="7">Belongs to the YTHDF family. YTHDF2 subfamily.</text>
</comment>
<proteinExistence type="evidence at protein level"/>
<gene>
    <name evidence="6 9" type="primary">ythdf2</name>
</gene>
<feature type="chain" id="PRO_0000439648" description="YTH domain-containing family protein 2">
    <location>
        <begin position="1"/>
        <end position="613"/>
    </location>
</feature>
<feature type="domain" description="YTH" evidence="2">
    <location>
        <begin position="423"/>
        <end position="557"/>
    </location>
</feature>
<feature type="region of interest" description="Disordered" evidence="3">
    <location>
        <begin position="1"/>
        <end position="43"/>
    </location>
</feature>
<feature type="region of interest" description="Localization to mRNA processing bodies (P-bodies)" evidence="1">
    <location>
        <begin position="2"/>
        <end position="397"/>
    </location>
</feature>
<feature type="region of interest" description="Disordered" evidence="3">
    <location>
        <begin position="215"/>
        <end position="234"/>
    </location>
</feature>
<feature type="region of interest" description="Disordered" evidence="3">
    <location>
        <begin position="244"/>
        <end position="396"/>
    </location>
</feature>
<feature type="region of interest" description="Interaction with m6A-containing mRNAs" evidence="1">
    <location>
        <begin position="398"/>
        <end position="613"/>
    </location>
</feature>
<feature type="region of interest" description="Disordered" evidence="3">
    <location>
        <begin position="578"/>
        <end position="613"/>
    </location>
</feature>
<feature type="compositionally biased region" description="Polar residues" evidence="3">
    <location>
        <begin position="16"/>
        <end position="27"/>
    </location>
</feature>
<feature type="compositionally biased region" description="Low complexity" evidence="3">
    <location>
        <begin position="218"/>
        <end position="234"/>
    </location>
</feature>
<feature type="compositionally biased region" description="Low complexity" evidence="3">
    <location>
        <begin position="295"/>
        <end position="307"/>
    </location>
</feature>
<feature type="compositionally biased region" description="Low complexity" evidence="3">
    <location>
        <begin position="345"/>
        <end position="360"/>
    </location>
</feature>
<feature type="compositionally biased region" description="Basic and acidic residues" evidence="3">
    <location>
        <begin position="578"/>
        <end position="587"/>
    </location>
</feature>
<feature type="compositionally biased region" description="Basic and acidic residues" evidence="3">
    <location>
        <begin position="604"/>
        <end position="613"/>
    </location>
</feature>
<feature type="binding site" evidence="1">
    <location>
        <begin position="429"/>
        <end position="431"/>
    </location>
    <ligand>
        <name>RNA</name>
        <dbReference type="ChEBI" id="CHEBI:33697"/>
    </ligand>
    <ligandPart>
        <name>N(6)-methyladenosine 5'-phosphate residue</name>
        <dbReference type="ChEBI" id="CHEBI:74449"/>
    </ligandPart>
</feature>
<feature type="binding site" evidence="1">
    <location>
        <position position="435"/>
    </location>
    <ligand>
        <name>RNA</name>
        <dbReference type="ChEBI" id="CHEBI:33697"/>
    </ligand>
    <ligandPart>
        <name>N(6)-methyladenosine 5'-phosphate residue</name>
        <dbReference type="ChEBI" id="CHEBI:74449"/>
    </ligandPart>
</feature>
<feature type="binding site" evidence="8">
    <location>
        <begin position="445"/>
        <end position="446"/>
    </location>
    <ligand>
        <name>RNA</name>
        <dbReference type="ChEBI" id="CHEBI:33697"/>
    </ligand>
    <ligandPart>
        <name>N(6)-methyladenosine 5'-phosphate residue</name>
        <dbReference type="ChEBI" id="CHEBI:74449"/>
    </ligandPart>
</feature>
<feature type="binding site" evidence="1">
    <location>
        <position position="475"/>
    </location>
    <ligand>
        <name>RNA</name>
        <dbReference type="ChEBI" id="CHEBI:33697"/>
    </ligand>
    <ligandPart>
        <name>N(6)-methyladenosine 5'-phosphate residue</name>
        <dbReference type="ChEBI" id="CHEBI:74449"/>
    </ligandPart>
</feature>
<feature type="binding site" evidence="8">
    <location>
        <position position="499"/>
    </location>
    <ligand>
        <name>RNA</name>
        <dbReference type="ChEBI" id="CHEBI:33697"/>
    </ligand>
    <ligandPart>
        <name>N(6)-methyladenosine 5'-phosphate residue</name>
        <dbReference type="ChEBI" id="CHEBI:74449"/>
    </ligandPart>
</feature>
<feature type="binding site" evidence="8">
    <location>
        <position position="504"/>
    </location>
    <ligand>
        <name>RNA</name>
        <dbReference type="ChEBI" id="CHEBI:33697"/>
    </ligand>
    <ligandPart>
        <name>N(6)-methyladenosine 5'-phosphate residue</name>
        <dbReference type="ChEBI" id="CHEBI:74449"/>
    </ligandPart>
</feature>
<feature type="splice variant" id="VSP_058906" description="In isoform 2.">
    <original>EVQGSDPYSN</original>
    <variation>TCHGLAPSGI</variation>
    <location>
        <begin position="587"/>
        <end position="596"/>
    </location>
</feature>
<feature type="splice variant" id="VSP_058907" description="In isoform 2.">
    <location>
        <begin position="597"/>
        <end position="613"/>
    </location>
</feature>
<feature type="mutagenesis site" description="Abolished binding to N6-methyladenosine (m6A)-containing RNAs; when associated to A-499 and A-504." evidence="5">
    <original>W</original>
    <variation>A</variation>
    <location>
        <position position="445"/>
    </location>
</feature>
<feature type="mutagenesis site" description="Abolished binding to N6-methyladenosine (m6A)-containing RNAs; when associated to A-445 and A-504." evidence="5">
    <original>W</original>
    <variation>A</variation>
    <location>
        <position position="499"/>
    </location>
</feature>
<feature type="mutagenesis site" description="Abolished binding to N6-methyladenosine (m6A)-containing RNAs; when associated to A-445 and A-499." evidence="5">
    <original>W</original>
    <variation>A</variation>
    <location>
        <position position="504"/>
    </location>
</feature>
<feature type="sequence conflict" description="In Ref. 2; AAH47846." evidence="7" ref="2">
    <original>T</original>
    <variation>A</variation>
    <location>
        <position position="219"/>
    </location>
</feature>
<feature type="sequence conflict" description="In Ref. 2; AAH47846." evidence="7" ref="2">
    <original>A</original>
    <variation>V</variation>
    <location>
        <position position="354"/>
    </location>
</feature>
<feature type="sequence conflict" description="In Ref. 2; AAH47846." evidence="7" ref="2">
    <original>L</original>
    <variation>P</variation>
    <location>
        <position position="468"/>
    </location>
</feature>
<reference key="1">
    <citation type="journal article" date="2013" name="Nature">
        <title>The zebrafish reference genome sequence and its relationship to the human genome.</title>
        <authorList>
            <person name="Howe K."/>
            <person name="Clark M.D."/>
            <person name="Torroja C.F."/>
            <person name="Torrance J."/>
            <person name="Berthelot C."/>
            <person name="Muffato M."/>
            <person name="Collins J.E."/>
            <person name="Humphray S."/>
            <person name="McLaren K."/>
            <person name="Matthews L."/>
            <person name="McLaren S."/>
            <person name="Sealy I."/>
            <person name="Caccamo M."/>
            <person name="Churcher C."/>
            <person name="Scott C."/>
            <person name="Barrett J.C."/>
            <person name="Koch R."/>
            <person name="Rauch G.J."/>
            <person name="White S."/>
            <person name="Chow W."/>
            <person name="Kilian B."/>
            <person name="Quintais L.T."/>
            <person name="Guerra-Assuncao J.A."/>
            <person name="Zhou Y."/>
            <person name="Gu Y."/>
            <person name="Yen J."/>
            <person name="Vogel J.H."/>
            <person name="Eyre T."/>
            <person name="Redmond S."/>
            <person name="Banerjee R."/>
            <person name="Chi J."/>
            <person name="Fu B."/>
            <person name="Langley E."/>
            <person name="Maguire S.F."/>
            <person name="Laird G.K."/>
            <person name="Lloyd D."/>
            <person name="Kenyon E."/>
            <person name="Donaldson S."/>
            <person name="Sehra H."/>
            <person name="Almeida-King J."/>
            <person name="Loveland J."/>
            <person name="Trevanion S."/>
            <person name="Jones M."/>
            <person name="Quail M."/>
            <person name="Willey D."/>
            <person name="Hunt A."/>
            <person name="Burton J."/>
            <person name="Sims S."/>
            <person name="McLay K."/>
            <person name="Plumb B."/>
            <person name="Davis J."/>
            <person name="Clee C."/>
            <person name="Oliver K."/>
            <person name="Clark R."/>
            <person name="Riddle C."/>
            <person name="Elliot D."/>
            <person name="Threadgold G."/>
            <person name="Harden G."/>
            <person name="Ware D."/>
            <person name="Begum S."/>
            <person name="Mortimore B."/>
            <person name="Kerry G."/>
            <person name="Heath P."/>
            <person name="Phillimore B."/>
            <person name="Tracey A."/>
            <person name="Corby N."/>
            <person name="Dunn M."/>
            <person name="Johnson C."/>
            <person name="Wood J."/>
            <person name="Clark S."/>
            <person name="Pelan S."/>
            <person name="Griffiths G."/>
            <person name="Smith M."/>
            <person name="Glithero R."/>
            <person name="Howden P."/>
            <person name="Barker N."/>
            <person name="Lloyd C."/>
            <person name="Stevens C."/>
            <person name="Harley J."/>
            <person name="Holt K."/>
            <person name="Panagiotidis G."/>
            <person name="Lovell J."/>
            <person name="Beasley H."/>
            <person name="Henderson C."/>
            <person name="Gordon D."/>
            <person name="Auger K."/>
            <person name="Wright D."/>
            <person name="Collins J."/>
            <person name="Raisen C."/>
            <person name="Dyer L."/>
            <person name="Leung K."/>
            <person name="Robertson L."/>
            <person name="Ambridge K."/>
            <person name="Leongamornlert D."/>
            <person name="McGuire S."/>
            <person name="Gilderthorp R."/>
            <person name="Griffiths C."/>
            <person name="Manthravadi D."/>
            <person name="Nichol S."/>
            <person name="Barker G."/>
            <person name="Whitehead S."/>
            <person name="Kay M."/>
            <person name="Brown J."/>
            <person name="Murnane C."/>
            <person name="Gray E."/>
            <person name="Humphries M."/>
            <person name="Sycamore N."/>
            <person name="Barker D."/>
            <person name="Saunders D."/>
            <person name="Wallis J."/>
            <person name="Babbage A."/>
            <person name="Hammond S."/>
            <person name="Mashreghi-Mohammadi M."/>
            <person name="Barr L."/>
            <person name="Martin S."/>
            <person name="Wray P."/>
            <person name="Ellington A."/>
            <person name="Matthews N."/>
            <person name="Ellwood M."/>
            <person name="Woodmansey R."/>
            <person name="Clark G."/>
            <person name="Cooper J."/>
            <person name="Tromans A."/>
            <person name="Grafham D."/>
            <person name="Skuce C."/>
            <person name="Pandian R."/>
            <person name="Andrews R."/>
            <person name="Harrison E."/>
            <person name="Kimberley A."/>
            <person name="Garnett J."/>
            <person name="Fosker N."/>
            <person name="Hall R."/>
            <person name="Garner P."/>
            <person name="Kelly D."/>
            <person name="Bird C."/>
            <person name="Palmer S."/>
            <person name="Gehring I."/>
            <person name="Berger A."/>
            <person name="Dooley C.M."/>
            <person name="Ersan-Urun Z."/>
            <person name="Eser C."/>
            <person name="Geiger H."/>
            <person name="Geisler M."/>
            <person name="Karotki L."/>
            <person name="Kirn A."/>
            <person name="Konantz J."/>
            <person name="Konantz M."/>
            <person name="Oberlander M."/>
            <person name="Rudolph-Geiger S."/>
            <person name="Teucke M."/>
            <person name="Lanz C."/>
            <person name="Raddatz G."/>
            <person name="Osoegawa K."/>
            <person name="Zhu B."/>
            <person name="Rapp A."/>
            <person name="Widaa S."/>
            <person name="Langford C."/>
            <person name="Yang F."/>
            <person name="Schuster S.C."/>
            <person name="Carter N.P."/>
            <person name="Harrow J."/>
            <person name="Ning Z."/>
            <person name="Herrero J."/>
            <person name="Searle S.M."/>
            <person name="Enright A."/>
            <person name="Geisler R."/>
            <person name="Plasterk R.H."/>
            <person name="Lee C."/>
            <person name="Westerfield M."/>
            <person name="de Jong P.J."/>
            <person name="Zon L.I."/>
            <person name="Postlethwait J.H."/>
            <person name="Nusslein-Volhard C."/>
            <person name="Hubbard T.J."/>
            <person name="Roest Crollius H."/>
            <person name="Rogers J."/>
            <person name="Stemple D.L."/>
        </authorList>
    </citation>
    <scope>NUCLEOTIDE SEQUENCE [LARGE SCALE GENOMIC DNA]</scope>
    <source>
        <strain>Tuebingen</strain>
    </source>
</reference>
<reference key="2">
    <citation type="submission" date="2003-03" db="EMBL/GenBank/DDBJ databases">
        <authorList>
            <consortium name="NIH - Zebrafish Gene Collection (ZGC) project"/>
        </authorList>
    </citation>
    <scope>NUCLEOTIDE SEQUENCE [LARGE SCALE MRNA] (ISOFORM 2)</scope>
</reference>
<reference key="3">
    <citation type="journal article" date="2017" name="Nature">
        <title>m(6)A-dependent maternal mRNA clearance facilitates zebrafish maternal-to-zygotic transition.</title>
        <authorList>
            <person name="Zhao B.S."/>
            <person name="Wang X."/>
            <person name="Beadell A.V."/>
            <person name="Lu Z."/>
            <person name="Shi H."/>
            <person name="Kuuspalu A."/>
            <person name="Ho R.K."/>
            <person name="He C."/>
        </authorList>
    </citation>
    <scope>FUNCTION</scope>
    <scope>DISRUPTION PHENOTYPE</scope>
    <scope>DEVELOPMENTAL STAGE</scope>
</reference>
<reference key="4">
    <citation type="journal article" date="2017" name="Nature">
        <title>m(6)A modulates haematopoietic stem and progenitor cell specification.</title>
        <authorList>
            <person name="Zhang C."/>
            <person name="Chen Y."/>
            <person name="Sun B."/>
            <person name="Wang L."/>
            <person name="Yang Y."/>
            <person name="Ma D."/>
            <person name="Lv J."/>
            <person name="Heng J."/>
            <person name="Ding Y."/>
            <person name="Xue Y."/>
            <person name="Lu X."/>
            <person name="Xiao W."/>
            <person name="Yang Y.G."/>
            <person name="Liu F."/>
        </authorList>
    </citation>
    <scope>FUNCTION</scope>
    <scope>MUTAGENESIS OF TRP-445; TRP-499 AND TRP-504</scope>
</reference>
<name>YTHD2_DANRE</name>
<keyword id="KW-0025">Alternative splicing</keyword>
<keyword id="KW-0963">Cytoplasm</keyword>
<keyword id="KW-0539">Nucleus</keyword>
<keyword id="KW-1185">Reference proteome</keyword>
<keyword id="KW-0694">RNA-binding</keyword>
<sequence length="613" mass="66049">MSASSLLEQRPKGQANKVQNGAVTQKDTLNDDEFEPYLNAQPRQSNAYTAMSDSYMPSYYSPSIGFTYSLNEAAWSTGGDPPMPYLASYGQLSNGEHHFLPDAMFGQSGALGNNPFLGQHGFNFFPSGIDFPAWGNSSSQGQSTQSSGYSSSYAYAPSTLGGAMIDGQSPFAANEPLNKAVGMNSLDQGMAGLKIGAGDMAPKVVGSGLPGGPLSQVSTAPTMPPASMAPAKTASWADIASKPAKPQPKLKTKGGLGGTNLPPPPIKHNMDIGTWDNKGNMPKPAAPQQTSLPTNGQPPNQSSPQPGATAGGVPQLPLSNGQLVPPTGQLVQHPLPPGGQPGAVPPQLSQGPPASQPSQPTRWVPPRNRANGFGDAAGGPGQSPPNSGMGGITVPAEPHPVLEKLRMVNNYNPKDFDWNPKHGRVFIIKSYSEDDIHRSIKYNIWCSTEHGNKRLDAAYRSLANKGPLYLLFSVNGSGHFCGVAEMRSPVDYNTCAGVWSQDKWKGRFDVRWIFVKDVPNSQLRHIRLENNENKPVTNSRDTQEVPLDKARQVLKIIASYKHTTSIFDDFSHYEKRQEEEESVKKVEVQGSDPYSNNSSRSHYRMQDRQGRVK</sequence>
<organism>
    <name type="scientific">Danio rerio</name>
    <name type="common">Zebrafish</name>
    <name type="synonym">Brachydanio rerio</name>
    <dbReference type="NCBI Taxonomy" id="7955"/>
    <lineage>
        <taxon>Eukaryota</taxon>
        <taxon>Metazoa</taxon>
        <taxon>Chordata</taxon>
        <taxon>Craniata</taxon>
        <taxon>Vertebrata</taxon>
        <taxon>Euteleostomi</taxon>
        <taxon>Actinopterygii</taxon>
        <taxon>Neopterygii</taxon>
        <taxon>Teleostei</taxon>
        <taxon>Ostariophysi</taxon>
        <taxon>Cypriniformes</taxon>
        <taxon>Danionidae</taxon>
        <taxon>Danioninae</taxon>
        <taxon>Danio</taxon>
    </lineage>
</organism>
<evidence type="ECO:0000250" key="1">
    <source>
        <dbReference type="UniProtKB" id="Q9Y5A9"/>
    </source>
</evidence>
<evidence type="ECO:0000255" key="2">
    <source>
        <dbReference type="PROSITE-ProRule" id="PRU00225"/>
    </source>
</evidence>
<evidence type="ECO:0000256" key="3">
    <source>
        <dbReference type="SAM" id="MobiDB-lite"/>
    </source>
</evidence>
<evidence type="ECO:0000269" key="4">
    <source>
    </source>
</evidence>
<evidence type="ECO:0000269" key="5">
    <source>
    </source>
</evidence>
<evidence type="ECO:0000303" key="6">
    <source>
    </source>
</evidence>
<evidence type="ECO:0000305" key="7"/>
<evidence type="ECO:0000305" key="8">
    <source>
    </source>
</evidence>
<evidence type="ECO:0000312" key="9">
    <source>
        <dbReference type="ZFIN" id="ZDB-GENE-040426-948"/>
    </source>
</evidence>